<comment type="function">
    <text>Suppressor of bem1/bud5.</text>
</comment>
<comment type="subcellular location">
    <subcellularLocation>
        <location evidence="2">Membrane</location>
        <topology evidence="2">Single-pass membrane protein</topology>
    </subcellularLocation>
</comment>
<comment type="similarity">
    <text evidence="2">Belongs to the serine esterase family.</text>
</comment>
<comment type="sequence caution" evidence="2">
    <conflict type="erroneous initiation">
        <sequence resource="EMBL-CDS" id="AAB53686"/>
    </conflict>
</comment>
<comment type="sequence caution" evidence="2">
    <conflict type="erroneous initiation">
        <sequence resource="EMBL-CDS" id="BAA21399"/>
    </conflict>
</comment>
<accession>P54069</accession>
<accession>O13611</accession>
<protein>
    <recommendedName>
        <fullName>Protein bem46</fullName>
    </recommendedName>
</protein>
<sequence length="299" mass="33133">MAGSLSSAIFNVLKYSGMASLAVTLIALGFLYKYQKTLVYPSAFPQGSRENVPTPKEFNMEYERIELRTRDKVTLDSYLMLQSESPESRPTLLYFHANAGNMGHRLPIARVFYSALNMNVFIISYRGYGKSTGSPSEAGLKIDSQTALEYLMEHPICSKTKIVVYGQSIGGAVAIALTAKNQDRISALILENTFTSIKDMIPTVFPYGGSIISRFCTEIWSSQDEIRKIKKLPVLFLSGEKDEIVPPPQMVLLFGLCGSAKKKFHSFPKCTHNDTCLGDGYFQVIADFLAENDINTPAS</sequence>
<name>BEM46_SCHPO</name>
<organism>
    <name type="scientific">Schizosaccharomyces pombe (strain 972 / ATCC 24843)</name>
    <name type="common">Fission yeast</name>
    <dbReference type="NCBI Taxonomy" id="284812"/>
    <lineage>
        <taxon>Eukaryota</taxon>
        <taxon>Fungi</taxon>
        <taxon>Dikarya</taxon>
        <taxon>Ascomycota</taxon>
        <taxon>Taphrinomycotina</taxon>
        <taxon>Schizosaccharomycetes</taxon>
        <taxon>Schizosaccharomycetales</taxon>
        <taxon>Schizosaccharomycetaceae</taxon>
        <taxon>Schizosaccharomyces</taxon>
    </lineage>
</organism>
<feature type="chain" id="PRO_0000064909" description="Protein bem46">
    <location>
        <begin position="1"/>
        <end position="299"/>
    </location>
</feature>
<feature type="transmembrane region" description="Helical" evidence="1">
    <location>
        <begin position="15"/>
        <end position="32"/>
    </location>
</feature>
<proteinExistence type="evidence at transcript level"/>
<evidence type="ECO:0000255" key="1"/>
<evidence type="ECO:0000305" key="2"/>
<dbReference type="EMBL" id="U29892">
    <property type="protein sequence ID" value="AAB53686.1"/>
    <property type="status" value="ALT_INIT"/>
    <property type="molecule type" value="mRNA"/>
</dbReference>
<dbReference type="EMBL" id="AB004535">
    <property type="protein sequence ID" value="BAA21399.1"/>
    <property type="status" value="ALT_INIT"/>
    <property type="molecule type" value="Genomic_DNA"/>
</dbReference>
<dbReference type="EMBL" id="CU329671">
    <property type="protein sequence ID" value="CAC37493.1"/>
    <property type="molecule type" value="Genomic_DNA"/>
</dbReference>
<dbReference type="RefSeq" id="NP_595609.1">
    <property type="nucleotide sequence ID" value="NM_001021504.2"/>
</dbReference>
<dbReference type="SMR" id="P54069"/>
<dbReference type="BioGRID" id="276795">
    <property type="interactions" value="4"/>
</dbReference>
<dbReference type="FunCoup" id="P54069">
    <property type="interactions" value="183"/>
</dbReference>
<dbReference type="STRING" id="284812.P54069"/>
<dbReference type="ESTHER" id="schpo-be46">
    <property type="family name" value="ABHD13-BEM46"/>
</dbReference>
<dbReference type="MEROPS" id="S09.A94"/>
<dbReference type="iPTMnet" id="P54069"/>
<dbReference type="PaxDb" id="4896-SPBC32H8.03.1"/>
<dbReference type="EnsemblFungi" id="SPBC32H8.03.1">
    <property type="protein sequence ID" value="SPBC32H8.03.1:pep"/>
    <property type="gene ID" value="SPBC32H8.03"/>
</dbReference>
<dbReference type="GeneID" id="2540264"/>
<dbReference type="KEGG" id="spo:2540264"/>
<dbReference type="PomBase" id="SPBC32H8.03">
    <property type="gene designation" value="bem46"/>
</dbReference>
<dbReference type="VEuPathDB" id="FungiDB:SPBC32H8.03"/>
<dbReference type="eggNOG" id="KOG4391">
    <property type="taxonomic scope" value="Eukaryota"/>
</dbReference>
<dbReference type="HOGENOM" id="CLU_029375_2_0_1"/>
<dbReference type="InParanoid" id="P54069"/>
<dbReference type="OMA" id="QYWTSED"/>
<dbReference type="PhylomeDB" id="P54069"/>
<dbReference type="PRO" id="PR:P54069"/>
<dbReference type="Proteomes" id="UP000002485">
    <property type="component" value="Chromosome II"/>
</dbReference>
<dbReference type="GO" id="GO:0005783">
    <property type="term" value="C:endoplasmic reticulum"/>
    <property type="evidence" value="ECO:0007005"/>
    <property type="project" value="PomBase"/>
</dbReference>
<dbReference type="GO" id="GO:0016020">
    <property type="term" value="C:membrane"/>
    <property type="evidence" value="ECO:0000318"/>
    <property type="project" value="GO_Central"/>
</dbReference>
<dbReference type="GO" id="GO:0008474">
    <property type="term" value="F:palmitoyl-(protein) hydrolase activity"/>
    <property type="evidence" value="ECO:0000318"/>
    <property type="project" value="GO_Central"/>
</dbReference>
<dbReference type="Gene3D" id="3.40.50.1820">
    <property type="entry name" value="alpha/beta hydrolase"/>
    <property type="match status" value="1"/>
</dbReference>
<dbReference type="InterPro" id="IPR000073">
    <property type="entry name" value="AB_hydrolase_1"/>
</dbReference>
<dbReference type="InterPro" id="IPR029058">
    <property type="entry name" value="AB_hydrolase_fold"/>
</dbReference>
<dbReference type="PANTHER" id="PTHR12277">
    <property type="entry name" value="ALPHA/BETA HYDROLASE DOMAIN-CONTAINING PROTEIN"/>
    <property type="match status" value="1"/>
</dbReference>
<dbReference type="PANTHER" id="PTHR12277:SF81">
    <property type="entry name" value="PROTEIN ABHD13"/>
    <property type="match status" value="1"/>
</dbReference>
<dbReference type="Pfam" id="PF00561">
    <property type="entry name" value="Abhydrolase_1"/>
    <property type="match status" value="1"/>
</dbReference>
<dbReference type="SUPFAM" id="SSF53474">
    <property type="entry name" value="alpha/beta-Hydrolases"/>
    <property type="match status" value="1"/>
</dbReference>
<keyword id="KW-0472">Membrane</keyword>
<keyword id="KW-1185">Reference proteome</keyword>
<keyword id="KW-0812">Transmembrane</keyword>
<keyword id="KW-1133">Transmembrane helix</keyword>
<reference key="1">
    <citation type="submission" date="1995-09" db="EMBL/GenBank/DDBJ databases">
        <authorList>
            <person name="Valencik M.L."/>
            <person name="Pringle J.R."/>
        </authorList>
    </citation>
    <scope>NUCLEOTIDE SEQUENCE [MRNA]</scope>
</reference>
<reference key="2">
    <citation type="journal article" date="2000" name="Yeast">
        <title>A 38 kb segment containing the cdc2 gene from the left arm of fission yeast chromosome II: sequence analysis and characterization of the genomic DNA and cDNAs encoded on the segment.</title>
        <authorList>
            <person name="Machida M."/>
            <person name="Yamazaki S."/>
            <person name="Kunihiro S."/>
            <person name="Tanaka T."/>
            <person name="Kushida N."/>
            <person name="Jinno K."/>
            <person name="Haikawa Y."/>
            <person name="Yamazaki J."/>
            <person name="Yamamoto S."/>
            <person name="Sekine M."/>
            <person name="Oguchi A."/>
            <person name="Nagai Y."/>
            <person name="Sakai M."/>
            <person name="Aoki K."/>
            <person name="Ogura K."/>
            <person name="Kudoh Y."/>
            <person name="Kikuchi H."/>
            <person name="Zhang M.Q."/>
            <person name="Yanagida M."/>
        </authorList>
    </citation>
    <scope>NUCLEOTIDE SEQUENCE [LARGE SCALE GENOMIC DNA]</scope>
    <source>
        <strain>972 / ATCC 24843</strain>
    </source>
</reference>
<reference key="3">
    <citation type="journal article" date="2002" name="Nature">
        <title>The genome sequence of Schizosaccharomyces pombe.</title>
        <authorList>
            <person name="Wood V."/>
            <person name="Gwilliam R."/>
            <person name="Rajandream M.A."/>
            <person name="Lyne M.H."/>
            <person name="Lyne R."/>
            <person name="Stewart A."/>
            <person name="Sgouros J.G."/>
            <person name="Peat N."/>
            <person name="Hayles J."/>
            <person name="Baker S.G."/>
            <person name="Basham D."/>
            <person name="Bowman S."/>
            <person name="Brooks K."/>
            <person name="Brown D."/>
            <person name="Brown S."/>
            <person name="Chillingworth T."/>
            <person name="Churcher C.M."/>
            <person name="Collins M."/>
            <person name="Connor R."/>
            <person name="Cronin A."/>
            <person name="Davis P."/>
            <person name="Feltwell T."/>
            <person name="Fraser A."/>
            <person name="Gentles S."/>
            <person name="Goble A."/>
            <person name="Hamlin N."/>
            <person name="Harris D.E."/>
            <person name="Hidalgo J."/>
            <person name="Hodgson G."/>
            <person name="Holroyd S."/>
            <person name="Hornsby T."/>
            <person name="Howarth S."/>
            <person name="Huckle E.J."/>
            <person name="Hunt S."/>
            <person name="Jagels K."/>
            <person name="James K.D."/>
            <person name="Jones L."/>
            <person name="Jones M."/>
            <person name="Leather S."/>
            <person name="McDonald S."/>
            <person name="McLean J."/>
            <person name="Mooney P."/>
            <person name="Moule S."/>
            <person name="Mungall K.L."/>
            <person name="Murphy L.D."/>
            <person name="Niblett D."/>
            <person name="Odell C."/>
            <person name="Oliver K."/>
            <person name="O'Neil S."/>
            <person name="Pearson D."/>
            <person name="Quail M.A."/>
            <person name="Rabbinowitsch E."/>
            <person name="Rutherford K.M."/>
            <person name="Rutter S."/>
            <person name="Saunders D."/>
            <person name="Seeger K."/>
            <person name="Sharp S."/>
            <person name="Skelton J."/>
            <person name="Simmonds M.N."/>
            <person name="Squares R."/>
            <person name="Squares S."/>
            <person name="Stevens K."/>
            <person name="Taylor K."/>
            <person name="Taylor R.G."/>
            <person name="Tivey A."/>
            <person name="Walsh S.V."/>
            <person name="Warren T."/>
            <person name="Whitehead S."/>
            <person name="Woodward J.R."/>
            <person name="Volckaert G."/>
            <person name="Aert R."/>
            <person name="Robben J."/>
            <person name="Grymonprez B."/>
            <person name="Weltjens I."/>
            <person name="Vanstreels E."/>
            <person name="Rieger M."/>
            <person name="Schaefer M."/>
            <person name="Mueller-Auer S."/>
            <person name="Gabel C."/>
            <person name="Fuchs M."/>
            <person name="Duesterhoeft A."/>
            <person name="Fritzc C."/>
            <person name="Holzer E."/>
            <person name="Moestl D."/>
            <person name="Hilbert H."/>
            <person name="Borzym K."/>
            <person name="Langer I."/>
            <person name="Beck A."/>
            <person name="Lehrach H."/>
            <person name="Reinhardt R."/>
            <person name="Pohl T.M."/>
            <person name="Eger P."/>
            <person name="Zimmermann W."/>
            <person name="Wedler H."/>
            <person name="Wambutt R."/>
            <person name="Purnelle B."/>
            <person name="Goffeau A."/>
            <person name="Cadieu E."/>
            <person name="Dreano S."/>
            <person name="Gloux S."/>
            <person name="Lelaure V."/>
            <person name="Mottier S."/>
            <person name="Galibert F."/>
            <person name="Aves S.J."/>
            <person name="Xiang Z."/>
            <person name="Hunt C."/>
            <person name="Moore K."/>
            <person name="Hurst S.M."/>
            <person name="Lucas M."/>
            <person name="Rochet M."/>
            <person name="Gaillardin C."/>
            <person name="Tallada V.A."/>
            <person name="Garzon A."/>
            <person name="Thode G."/>
            <person name="Daga R.R."/>
            <person name="Cruzado L."/>
            <person name="Jimenez J."/>
            <person name="Sanchez M."/>
            <person name="del Rey F."/>
            <person name="Benito J."/>
            <person name="Dominguez A."/>
            <person name="Revuelta J.L."/>
            <person name="Moreno S."/>
            <person name="Armstrong J."/>
            <person name="Forsburg S.L."/>
            <person name="Cerutti L."/>
            <person name="Lowe T."/>
            <person name="McCombie W.R."/>
            <person name="Paulsen I."/>
            <person name="Potashkin J."/>
            <person name="Shpakovski G.V."/>
            <person name="Ussery D."/>
            <person name="Barrell B.G."/>
            <person name="Nurse P."/>
        </authorList>
    </citation>
    <scope>NUCLEOTIDE SEQUENCE [LARGE SCALE GENOMIC DNA]</scope>
    <source>
        <strain>972 / ATCC 24843</strain>
    </source>
</reference>
<gene>
    <name type="primary">bem46</name>
    <name type="ORF">pi020</name>
    <name type="ORF">SPBC32H8.03</name>
</gene>